<accession>A0PZN8</accession>
<proteinExistence type="inferred from homology"/>
<comment type="catalytic activity">
    <reaction evidence="1">
        <text>tRNA(Phe) + L-phenylalanine + ATP = L-phenylalanyl-tRNA(Phe) + AMP + diphosphate + H(+)</text>
        <dbReference type="Rhea" id="RHEA:19413"/>
        <dbReference type="Rhea" id="RHEA-COMP:9668"/>
        <dbReference type="Rhea" id="RHEA-COMP:9699"/>
        <dbReference type="ChEBI" id="CHEBI:15378"/>
        <dbReference type="ChEBI" id="CHEBI:30616"/>
        <dbReference type="ChEBI" id="CHEBI:33019"/>
        <dbReference type="ChEBI" id="CHEBI:58095"/>
        <dbReference type="ChEBI" id="CHEBI:78442"/>
        <dbReference type="ChEBI" id="CHEBI:78531"/>
        <dbReference type="ChEBI" id="CHEBI:456215"/>
        <dbReference type="EC" id="6.1.1.20"/>
    </reaction>
</comment>
<comment type="cofactor">
    <cofactor evidence="1">
        <name>Mg(2+)</name>
        <dbReference type="ChEBI" id="CHEBI:18420"/>
    </cofactor>
    <text evidence="1">Binds 2 magnesium ions per tetramer.</text>
</comment>
<comment type="subunit">
    <text evidence="1">Tetramer of two alpha and two beta subunits.</text>
</comment>
<comment type="subcellular location">
    <subcellularLocation>
        <location evidence="1">Cytoplasm</location>
    </subcellularLocation>
</comment>
<comment type="similarity">
    <text evidence="1">Belongs to the class-II aminoacyl-tRNA synthetase family. Phe-tRNA synthetase alpha subunit type 1 subfamily.</text>
</comment>
<protein>
    <recommendedName>
        <fullName evidence="1">Phenylalanine--tRNA ligase alpha subunit</fullName>
        <ecNumber evidence="1">6.1.1.20</ecNumber>
    </recommendedName>
    <alternativeName>
        <fullName evidence="1">Phenylalanyl-tRNA synthetase alpha subunit</fullName>
        <shortName evidence="1">PheRS</shortName>
    </alternativeName>
</protein>
<reference key="1">
    <citation type="journal article" date="2006" name="Nat. Biotechnol.">
        <title>The genome and transcriptomes of the anti-tumor agent Clostridium novyi-NT.</title>
        <authorList>
            <person name="Bettegowda C."/>
            <person name="Huang X."/>
            <person name="Lin J."/>
            <person name="Cheong I."/>
            <person name="Kohli M."/>
            <person name="Szabo S.A."/>
            <person name="Zhang X."/>
            <person name="Diaz L.A. Jr."/>
            <person name="Velculescu V.E."/>
            <person name="Parmigiani G."/>
            <person name="Kinzler K.W."/>
            <person name="Vogelstein B."/>
            <person name="Zhou S."/>
        </authorList>
    </citation>
    <scope>NUCLEOTIDE SEQUENCE [LARGE SCALE GENOMIC DNA]</scope>
    <source>
        <strain>NT</strain>
    </source>
</reference>
<evidence type="ECO:0000255" key="1">
    <source>
        <dbReference type="HAMAP-Rule" id="MF_00281"/>
    </source>
</evidence>
<organism>
    <name type="scientific">Clostridium novyi (strain NT)</name>
    <dbReference type="NCBI Taxonomy" id="386415"/>
    <lineage>
        <taxon>Bacteria</taxon>
        <taxon>Bacillati</taxon>
        <taxon>Bacillota</taxon>
        <taxon>Clostridia</taxon>
        <taxon>Eubacteriales</taxon>
        <taxon>Clostridiaceae</taxon>
        <taxon>Clostridium</taxon>
    </lineage>
</organism>
<feature type="chain" id="PRO_1000006817" description="Phenylalanine--tRNA ligase alpha subunit">
    <location>
        <begin position="1"/>
        <end position="339"/>
    </location>
</feature>
<feature type="binding site" evidence="1">
    <location>
        <position position="254"/>
    </location>
    <ligand>
        <name>Mg(2+)</name>
        <dbReference type="ChEBI" id="CHEBI:18420"/>
        <note>shared with beta subunit</note>
    </ligand>
</feature>
<keyword id="KW-0030">Aminoacyl-tRNA synthetase</keyword>
<keyword id="KW-0067">ATP-binding</keyword>
<keyword id="KW-0963">Cytoplasm</keyword>
<keyword id="KW-0436">Ligase</keyword>
<keyword id="KW-0460">Magnesium</keyword>
<keyword id="KW-0479">Metal-binding</keyword>
<keyword id="KW-0547">Nucleotide-binding</keyword>
<keyword id="KW-0648">Protein biosynthesis</keyword>
<keyword id="KW-1185">Reference proteome</keyword>
<gene>
    <name evidence="1" type="primary">pheS</name>
    <name type="ordered locus">NT01CX_1767</name>
</gene>
<dbReference type="EC" id="6.1.1.20" evidence="1"/>
<dbReference type="EMBL" id="CP000382">
    <property type="protein sequence ID" value="ABK60563.1"/>
    <property type="molecule type" value="Genomic_DNA"/>
</dbReference>
<dbReference type="RefSeq" id="WP_011721845.1">
    <property type="nucleotide sequence ID" value="NC_008593.1"/>
</dbReference>
<dbReference type="SMR" id="A0PZN8"/>
<dbReference type="STRING" id="386415.NT01CX_1767"/>
<dbReference type="KEGG" id="cno:NT01CX_1767"/>
<dbReference type="eggNOG" id="COG0016">
    <property type="taxonomic scope" value="Bacteria"/>
</dbReference>
<dbReference type="HOGENOM" id="CLU_025086_0_1_9"/>
<dbReference type="Proteomes" id="UP000008220">
    <property type="component" value="Chromosome"/>
</dbReference>
<dbReference type="GO" id="GO:0005737">
    <property type="term" value="C:cytoplasm"/>
    <property type="evidence" value="ECO:0007669"/>
    <property type="project" value="UniProtKB-SubCell"/>
</dbReference>
<dbReference type="GO" id="GO:0005524">
    <property type="term" value="F:ATP binding"/>
    <property type="evidence" value="ECO:0007669"/>
    <property type="project" value="UniProtKB-UniRule"/>
</dbReference>
<dbReference type="GO" id="GO:0140096">
    <property type="term" value="F:catalytic activity, acting on a protein"/>
    <property type="evidence" value="ECO:0007669"/>
    <property type="project" value="UniProtKB-ARBA"/>
</dbReference>
<dbReference type="GO" id="GO:0000287">
    <property type="term" value="F:magnesium ion binding"/>
    <property type="evidence" value="ECO:0007669"/>
    <property type="project" value="UniProtKB-UniRule"/>
</dbReference>
<dbReference type="GO" id="GO:0004826">
    <property type="term" value="F:phenylalanine-tRNA ligase activity"/>
    <property type="evidence" value="ECO:0007669"/>
    <property type="project" value="UniProtKB-UniRule"/>
</dbReference>
<dbReference type="GO" id="GO:0016740">
    <property type="term" value="F:transferase activity"/>
    <property type="evidence" value="ECO:0007669"/>
    <property type="project" value="UniProtKB-ARBA"/>
</dbReference>
<dbReference type="GO" id="GO:0000049">
    <property type="term" value="F:tRNA binding"/>
    <property type="evidence" value="ECO:0007669"/>
    <property type="project" value="InterPro"/>
</dbReference>
<dbReference type="GO" id="GO:0006432">
    <property type="term" value="P:phenylalanyl-tRNA aminoacylation"/>
    <property type="evidence" value="ECO:0007669"/>
    <property type="project" value="UniProtKB-UniRule"/>
</dbReference>
<dbReference type="CDD" id="cd00496">
    <property type="entry name" value="PheRS_alpha_core"/>
    <property type="match status" value="1"/>
</dbReference>
<dbReference type="FunFam" id="3.30.930.10:FF:000003">
    <property type="entry name" value="Phenylalanine--tRNA ligase alpha subunit"/>
    <property type="match status" value="1"/>
</dbReference>
<dbReference type="Gene3D" id="3.30.930.10">
    <property type="entry name" value="Bira Bifunctional Protein, Domain 2"/>
    <property type="match status" value="1"/>
</dbReference>
<dbReference type="HAMAP" id="MF_00281">
    <property type="entry name" value="Phe_tRNA_synth_alpha1"/>
    <property type="match status" value="1"/>
</dbReference>
<dbReference type="InterPro" id="IPR006195">
    <property type="entry name" value="aa-tRNA-synth_II"/>
</dbReference>
<dbReference type="InterPro" id="IPR045864">
    <property type="entry name" value="aa-tRNA-synth_II/BPL/LPL"/>
</dbReference>
<dbReference type="InterPro" id="IPR004529">
    <property type="entry name" value="Phe-tRNA-synth_IIc_asu"/>
</dbReference>
<dbReference type="InterPro" id="IPR004188">
    <property type="entry name" value="Phe-tRNA_ligase_II_N"/>
</dbReference>
<dbReference type="InterPro" id="IPR022911">
    <property type="entry name" value="Phe_tRNA_ligase_alpha1_bac"/>
</dbReference>
<dbReference type="InterPro" id="IPR002319">
    <property type="entry name" value="Phenylalanyl-tRNA_Synthase"/>
</dbReference>
<dbReference type="InterPro" id="IPR010978">
    <property type="entry name" value="tRNA-bd_arm"/>
</dbReference>
<dbReference type="NCBIfam" id="TIGR00468">
    <property type="entry name" value="pheS"/>
    <property type="match status" value="1"/>
</dbReference>
<dbReference type="PANTHER" id="PTHR11538:SF41">
    <property type="entry name" value="PHENYLALANINE--TRNA LIGASE, MITOCHONDRIAL"/>
    <property type="match status" value="1"/>
</dbReference>
<dbReference type="PANTHER" id="PTHR11538">
    <property type="entry name" value="PHENYLALANYL-TRNA SYNTHETASE"/>
    <property type="match status" value="1"/>
</dbReference>
<dbReference type="Pfam" id="PF02912">
    <property type="entry name" value="Phe_tRNA-synt_N"/>
    <property type="match status" value="1"/>
</dbReference>
<dbReference type="Pfam" id="PF01409">
    <property type="entry name" value="tRNA-synt_2d"/>
    <property type="match status" value="1"/>
</dbReference>
<dbReference type="SUPFAM" id="SSF55681">
    <property type="entry name" value="Class II aaRS and biotin synthetases"/>
    <property type="match status" value="1"/>
</dbReference>
<dbReference type="SUPFAM" id="SSF46589">
    <property type="entry name" value="tRNA-binding arm"/>
    <property type="match status" value="1"/>
</dbReference>
<dbReference type="PROSITE" id="PS50862">
    <property type="entry name" value="AA_TRNA_LIGASE_II"/>
    <property type="match status" value="1"/>
</dbReference>
<sequence length="339" mass="38534">MKEKLQQIKNTALEELNKISNKAELENIRVKYLGKKGELTQILRGMGKLSSQERPVIGKLANEVRGSIEELIEKAVTEIKLKEKEAKLKNEVIDISMPGRKQTVGRKNPLQLTLDSIMDIFISMGFSIEEGPEVEKDYYNFEALNIPKNHPARGEQDTFYINDDVVLRTQTSPIQVRTMENQKPPIKMIAPGKVYRSDSVDATHSPIFYQIEGLVIDKGITFADLKGTLELFTKKMFGEKMQTKFRPHHFPFTEPSAEMDATCFVCGGKGCNVCKNSGWIELLGCGMVHPDVLRNCGIDPEVYSGFAFGFGLDRMVMQKYELDDIRLLYESDMRFLNQF</sequence>
<name>SYFA_CLONN</name>